<gene>
    <name evidence="1" type="primary">rodZ</name>
    <name type="ordered locus">EcSMS35_2668</name>
</gene>
<name>RODZ_ECOSM</name>
<evidence type="ECO:0000255" key="1">
    <source>
        <dbReference type="HAMAP-Rule" id="MF_02017"/>
    </source>
</evidence>
<evidence type="ECO:0000256" key="2">
    <source>
        <dbReference type="SAM" id="MobiDB-lite"/>
    </source>
</evidence>
<dbReference type="EMBL" id="CP000970">
    <property type="protein sequence ID" value="ACB19055.1"/>
    <property type="molecule type" value="Genomic_DNA"/>
</dbReference>
<dbReference type="RefSeq" id="WP_001090830.1">
    <property type="nucleotide sequence ID" value="NC_010498.1"/>
</dbReference>
<dbReference type="SMR" id="B1LNH1"/>
<dbReference type="KEGG" id="ecm:EcSMS35_2668"/>
<dbReference type="HOGENOM" id="CLU_047530_3_1_6"/>
<dbReference type="Proteomes" id="UP000007011">
    <property type="component" value="Chromosome"/>
</dbReference>
<dbReference type="GO" id="GO:0005886">
    <property type="term" value="C:plasma membrane"/>
    <property type="evidence" value="ECO:0007669"/>
    <property type="project" value="UniProtKB-SubCell"/>
</dbReference>
<dbReference type="GO" id="GO:0003677">
    <property type="term" value="F:DNA binding"/>
    <property type="evidence" value="ECO:0007669"/>
    <property type="project" value="UniProtKB-KW"/>
</dbReference>
<dbReference type="GO" id="GO:0008360">
    <property type="term" value="P:regulation of cell shape"/>
    <property type="evidence" value="ECO:0007669"/>
    <property type="project" value="UniProtKB-UniRule"/>
</dbReference>
<dbReference type="CDD" id="cd00093">
    <property type="entry name" value="HTH_XRE"/>
    <property type="match status" value="1"/>
</dbReference>
<dbReference type="FunFam" id="1.10.260.40:FF:000014">
    <property type="entry name" value="Cytoskeleton protein RodZ"/>
    <property type="match status" value="1"/>
</dbReference>
<dbReference type="Gene3D" id="1.10.260.40">
    <property type="entry name" value="lambda repressor-like DNA-binding domains"/>
    <property type="match status" value="1"/>
</dbReference>
<dbReference type="HAMAP" id="MF_02017">
    <property type="entry name" value="RodZ"/>
    <property type="match status" value="1"/>
</dbReference>
<dbReference type="InterPro" id="IPR050400">
    <property type="entry name" value="Bact_Cytoskel_RodZ"/>
</dbReference>
<dbReference type="InterPro" id="IPR001387">
    <property type="entry name" value="Cro/C1-type_HTH"/>
</dbReference>
<dbReference type="InterPro" id="IPR010982">
    <property type="entry name" value="Lambda_DNA-bd_dom_sf"/>
</dbReference>
<dbReference type="InterPro" id="IPR023690">
    <property type="entry name" value="RodZ"/>
</dbReference>
<dbReference type="InterPro" id="IPR025194">
    <property type="entry name" value="RodZ-like_C"/>
</dbReference>
<dbReference type="NCBIfam" id="NF008109">
    <property type="entry name" value="PRK10856.1"/>
    <property type="match status" value="1"/>
</dbReference>
<dbReference type="PANTHER" id="PTHR34475">
    <property type="match status" value="1"/>
</dbReference>
<dbReference type="PANTHER" id="PTHR34475:SF1">
    <property type="entry name" value="CYTOSKELETON PROTEIN RODZ"/>
    <property type="match status" value="1"/>
</dbReference>
<dbReference type="Pfam" id="PF13413">
    <property type="entry name" value="HTH_25"/>
    <property type="match status" value="1"/>
</dbReference>
<dbReference type="Pfam" id="PF13464">
    <property type="entry name" value="RodZ_C"/>
    <property type="match status" value="1"/>
</dbReference>
<dbReference type="SMART" id="SM00530">
    <property type="entry name" value="HTH_XRE"/>
    <property type="match status" value="1"/>
</dbReference>
<dbReference type="SUPFAM" id="SSF47413">
    <property type="entry name" value="lambda repressor-like DNA-binding domains"/>
    <property type="match status" value="1"/>
</dbReference>
<dbReference type="PROSITE" id="PS50943">
    <property type="entry name" value="HTH_CROC1"/>
    <property type="match status" value="1"/>
</dbReference>
<feature type="chain" id="PRO_0000361836" description="Cytoskeleton protein RodZ">
    <location>
        <begin position="1"/>
        <end position="336"/>
    </location>
</feature>
<feature type="topological domain" description="Cytoplasmic" evidence="1">
    <location>
        <begin position="1"/>
        <end position="111"/>
    </location>
</feature>
<feature type="transmembrane region" description="Helical; Signal-anchor for type II membrane protein" evidence="1">
    <location>
        <begin position="112"/>
        <end position="132"/>
    </location>
</feature>
<feature type="topological domain" description="Periplasmic" evidence="1">
    <location>
        <begin position="133"/>
        <end position="336"/>
    </location>
</feature>
<feature type="domain" description="HTH cro/C1-type" evidence="1">
    <location>
        <begin position="19"/>
        <end position="71"/>
    </location>
</feature>
<feature type="DNA-binding region" description="H-T-H motif" evidence="1">
    <location>
        <begin position="30"/>
        <end position="49"/>
    </location>
</feature>
<feature type="region of interest" description="Disordered" evidence="2">
    <location>
        <begin position="148"/>
        <end position="248"/>
    </location>
</feature>
<feature type="compositionally biased region" description="Polar residues" evidence="2">
    <location>
        <begin position="148"/>
        <end position="164"/>
    </location>
</feature>
<feature type="compositionally biased region" description="Low complexity" evidence="2">
    <location>
        <begin position="165"/>
        <end position="201"/>
    </location>
</feature>
<feature type="compositionally biased region" description="Polar residues" evidence="2">
    <location>
        <begin position="202"/>
        <end position="217"/>
    </location>
</feature>
<feature type="compositionally biased region" description="Low complexity" evidence="2">
    <location>
        <begin position="219"/>
        <end position="236"/>
    </location>
</feature>
<reference key="1">
    <citation type="journal article" date="2008" name="J. Bacteriol.">
        <title>Insights into the environmental resistance gene pool from the genome sequence of the multidrug-resistant environmental isolate Escherichia coli SMS-3-5.</title>
        <authorList>
            <person name="Fricke W.F."/>
            <person name="Wright M.S."/>
            <person name="Lindell A.H."/>
            <person name="Harkins D.M."/>
            <person name="Baker-Austin C."/>
            <person name="Ravel J."/>
            <person name="Stepanauskas R."/>
        </authorList>
    </citation>
    <scope>NUCLEOTIDE SEQUENCE [LARGE SCALE GENOMIC DNA]</scope>
    <source>
        <strain>SMS-3-5 / SECEC</strain>
    </source>
</reference>
<organism>
    <name type="scientific">Escherichia coli (strain SMS-3-5 / SECEC)</name>
    <dbReference type="NCBI Taxonomy" id="439855"/>
    <lineage>
        <taxon>Bacteria</taxon>
        <taxon>Pseudomonadati</taxon>
        <taxon>Pseudomonadota</taxon>
        <taxon>Gammaproteobacteria</taxon>
        <taxon>Enterobacterales</taxon>
        <taxon>Enterobacteriaceae</taxon>
        <taxon>Escherichia</taxon>
    </lineage>
</organism>
<protein>
    <recommendedName>
        <fullName evidence="1">Cytoskeleton protein RodZ</fullName>
    </recommendedName>
</protein>
<sequence length="336" mass="36238">MNTEATHDQNEALTTGARLRNAREQLGLSQQAVAERLCLKVSTVRDIEEDKAPADLASTFLRGYIRSYARLVHIPEEELLPGLEKQAPLRAAKVAPMQSFSLGKRRKKRDGWLMTFTWLVLFVVIGLSGAWWWQDHKAQQEEITTMADQSSAELNNNQSQSVPLDTSTTTDQAMATTPTSPVDTTATNTQTPAATTAPSPTVDSQQNAVVPPSQANVDTAATPAPAATTMPDGAAPLPTDQAGVTTPAADPNALVMNFTADCWLEVTDATGKKLFSGMQRKDGNLNLTGQAPYKLKIGAPAAVQIQYQGKPVDLSRFIRTNQVARLTLNAEQSPAQ</sequence>
<comment type="function">
    <text evidence="1">Cytoskeletal protein that is involved in cell-shape control through regulation of the length of the long axis.</text>
</comment>
<comment type="subcellular location">
    <subcellularLocation>
        <location evidence="1">Cell inner membrane</location>
        <topology evidence="1">Single-pass type II membrane protein</topology>
    </subcellularLocation>
    <text evidence="1">Forms helical filaments along the long axis of the cell.</text>
</comment>
<comment type="domain">
    <text evidence="1">The helix-turn-helix (HTH) motif in the cytoplasmic domain of the N-terminus is involved in the formation of spirals to maintain the rigid rod shape. As this protein is anchored in the cytoplasmic membrane, the HTH motif may contribute to protein-protein interactions to form the RodZ helix, which is localized beneath the cytoplasmic membrane. The C-terminal domain may be critical for determination of the rod shape by probably interacting with enzymes required for synthesis of the peptidoglycan layer, including PBPs in the periplasm.</text>
</comment>
<comment type="similarity">
    <text evidence="1">Belongs to the RodZ family.</text>
</comment>
<proteinExistence type="inferred from homology"/>
<keyword id="KW-0997">Cell inner membrane</keyword>
<keyword id="KW-1003">Cell membrane</keyword>
<keyword id="KW-0133">Cell shape</keyword>
<keyword id="KW-0238">DNA-binding</keyword>
<keyword id="KW-0472">Membrane</keyword>
<keyword id="KW-0735">Signal-anchor</keyword>
<keyword id="KW-0812">Transmembrane</keyword>
<keyword id="KW-1133">Transmembrane helix</keyword>
<accession>B1LNH1</accession>